<organism>
    <name type="scientific">Rhodopseudomonas palustris (strain BisB18)</name>
    <dbReference type="NCBI Taxonomy" id="316056"/>
    <lineage>
        <taxon>Bacteria</taxon>
        <taxon>Pseudomonadati</taxon>
        <taxon>Pseudomonadota</taxon>
        <taxon>Alphaproteobacteria</taxon>
        <taxon>Hyphomicrobiales</taxon>
        <taxon>Nitrobacteraceae</taxon>
        <taxon>Rhodopseudomonas</taxon>
    </lineage>
</organism>
<proteinExistence type="inferred from homology"/>
<accession>Q213P4</accession>
<dbReference type="EC" id="2.7.1.170" evidence="1"/>
<dbReference type="EMBL" id="CP000301">
    <property type="protein sequence ID" value="ABD88392.1"/>
    <property type="molecule type" value="Genomic_DNA"/>
</dbReference>
<dbReference type="SMR" id="Q213P4"/>
<dbReference type="STRING" id="316056.RPC_2844"/>
<dbReference type="KEGG" id="rpc:RPC_2844"/>
<dbReference type="eggNOG" id="COG2377">
    <property type="taxonomic scope" value="Bacteria"/>
</dbReference>
<dbReference type="HOGENOM" id="CLU_038782_3_0_5"/>
<dbReference type="UniPathway" id="UPA00343"/>
<dbReference type="UniPathway" id="UPA00544"/>
<dbReference type="GO" id="GO:0005524">
    <property type="term" value="F:ATP binding"/>
    <property type="evidence" value="ECO:0007669"/>
    <property type="project" value="UniProtKB-UniRule"/>
</dbReference>
<dbReference type="GO" id="GO:0016301">
    <property type="term" value="F:kinase activity"/>
    <property type="evidence" value="ECO:0007669"/>
    <property type="project" value="UniProtKB-KW"/>
</dbReference>
<dbReference type="GO" id="GO:0016773">
    <property type="term" value="F:phosphotransferase activity, alcohol group as acceptor"/>
    <property type="evidence" value="ECO:0007669"/>
    <property type="project" value="UniProtKB-UniRule"/>
</dbReference>
<dbReference type="GO" id="GO:0097175">
    <property type="term" value="P:1,6-anhydro-N-acetyl-beta-muramic acid catabolic process"/>
    <property type="evidence" value="ECO:0007669"/>
    <property type="project" value="UniProtKB-UniRule"/>
</dbReference>
<dbReference type="GO" id="GO:0006040">
    <property type="term" value="P:amino sugar metabolic process"/>
    <property type="evidence" value="ECO:0007669"/>
    <property type="project" value="InterPro"/>
</dbReference>
<dbReference type="GO" id="GO:0009254">
    <property type="term" value="P:peptidoglycan turnover"/>
    <property type="evidence" value="ECO:0007669"/>
    <property type="project" value="UniProtKB-UniRule"/>
</dbReference>
<dbReference type="Gene3D" id="3.30.420.40">
    <property type="match status" value="2"/>
</dbReference>
<dbReference type="HAMAP" id="MF_01270">
    <property type="entry name" value="AnhMurNAc_kinase"/>
    <property type="match status" value="1"/>
</dbReference>
<dbReference type="InterPro" id="IPR005338">
    <property type="entry name" value="Anhydro_N_Ac-Mur_kinase"/>
</dbReference>
<dbReference type="InterPro" id="IPR043129">
    <property type="entry name" value="ATPase_NBD"/>
</dbReference>
<dbReference type="NCBIfam" id="NF007141">
    <property type="entry name" value="PRK09585.1-5"/>
    <property type="match status" value="1"/>
</dbReference>
<dbReference type="PANTHER" id="PTHR30605">
    <property type="entry name" value="ANHYDRO-N-ACETYLMURAMIC ACID KINASE"/>
    <property type="match status" value="1"/>
</dbReference>
<dbReference type="PANTHER" id="PTHR30605:SF0">
    <property type="entry name" value="ANHYDRO-N-ACETYLMURAMIC ACID KINASE"/>
    <property type="match status" value="1"/>
</dbReference>
<dbReference type="Pfam" id="PF03702">
    <property type="entry name" value="AnmK"/>
    <property type="match status" value="1"/>
</dbReference>
<dbReference type="SUPFAM" id="SSF53067">
    <property type="entry name" value="Actin-like ATPase domain"/>
    <property type="match status" value="1"/>
</dbReference>
<feature type="chain" id="PRO_0000250047" description="Anhydro-N-acetylmuramic acid kinase">
    <location>
        <begin position="1"/>
        <end position="365"/>
    </location>
</feature>
<feature type="binding site" evidence="1">
    <location>
        <begin position="9"/>
        <end position="16"/>
    </location>
    <ligand>
        <name>ATP</name>
        <dbReference type="ChEBI" id="CHEBI:30616"/>
    </ligand>
</feature>
<gene>
    <name evidence="1" type="primary">anmK</name>
    <name type="ordered locus">RPC_2844</name>
</gene>
<keyword id="KW-0067">ATP-binding</keyword>
<keyword id="KW-0119">Carbohydrate metabolism</keyword>
<keyword id="KW-0418">Kinase</keyword>
<keyword id="KW-0547">Nucleotide-binding</keyword>
<keyword id="KW-0808">Transferase</keyword>
<evidence type="ECO:0000255" key="1">
    <source>
        <dbReference type="HAMAP-Rule" id="MF_01270"/>
    </source>
</evidence>
<sequence length="365" mass="37956">MTAIGLMSGTSLDGVDVALIKTDGRRVSALGPTGYRPYSDAERSLLRQALAEAGQLTRRDDRPGSLGEAERMVTLAHAEAAANFTAQHGIAREDVDIVGFHGQTVLHRPAQKLTVQIGDAAALAKAIRVPVMHDFRAADVAAGGQGAPLVPVYHRALAQSLDRSGPLAVVNIGGVSNISYIDGHETLIACDTGPGNALLDDFVLRVSGQPFDAEGRLAAQGQVDEAWVAAALQHPFFAAPPPKSLDRNEFAALALPKLTPADGAATLTAFTAGAIAGIVPLLPKLPLSWIVTGGGARNLSLLRMLREKLAPASVENADALGWSADAMEAQAFGFLAARGLKGLPLTYPQTTGVVIPMTGGRIARP</sequence>
<comment type="function">
    <text evidence="1">Catalyzes the specific phosphorylation of 1,6-anhydro-N-acetylmuramic acid (anhMurNAc) with the simultaneous cleavage of the 1,6-anhydro ring, generating MurNAc-6-P. Is required for the utilization of anhMurNAc either imported from the medium or derived from its own cell wall murein, and thus plays a role in cell wall recycling.</text>
</comment>
<comment type="catalytic activity">
    <reaction evidence="1">
        <text>1,6-anhydro-N-acetyl-beta-muramate + ATP + H2O = N-acetyl-D-muramate 6-phosphate + ADP + H(+)</text>
        <dbReference type="Rhea" id="RHEA:24952"/>
        <dbReference type="ChEBI" id="CHEBI:15377"/>
        <dbReference type="ChEBI" id="CHEBI:15378"/>
        <dbReference type="ChEBI" id="CHEBI:30616"/>
        <dbReference type="ChEBI" id="CHEBI:58690"/>
        <dbReference type="ChEBI" id="CHEBI:58722"/>
        <dbReference type="ChEBI" id="CHEBI:456216"/>
        <dbReference type="EC" id="2.7.1.170"/>
    </reaction>
</comment>
<comment type="pathway">
    <text evidence="1">Amino-sugar metabolism; 1,6-anhydro-N-acetylmuramate degradation.</text>
</comment>
<comment type="pathway">
    <text evidence="1">Cell wall biogenesis; peptidoglycan recycling.</text>
</comment>
<comment type="similarity">
    <text evidence="1">Belongs to the anhydro-N-acetylmuramic acid kinase family.</text>
</comment>
<reference key="1">
    <citation type="submission" date="2006-03" db="EMBL/GenBank/DDBJ databases">
        <title>Complete sequence of Rhodopseudomonas palustris BisB18.</title>
        <authorList>
            <consortium name="US DOE Joint Genome Institute"/>
            <person name="Copeland A."/>
            <person name="Lucas S."/>
            <person name="Lapidus A."/>
            <person name="Barry K."/>
            <person name="Detter J.C."/>
            <person name="Glavina del Rio T."/>
            <person name="Hammon N."/>
            <person name="Israni S."/>
            <person name="Dalin E."/>
            <person name="Tice H."/>
            <person name="Pitluck S."/>
            <person name="Chain P."/>
            <person name="Malfatti S."/>
            <person name="Shin M."/>
            <person name="Vergez L."/>
            <person name="Schmutz J."/>
            <person name="Larimer F."/>
            <person name="Land M."/>
            <person name="Hauser L."/>
            <person name="Pelletier D.A."/>
            <person name="Kyrpides N."/>
            <person name="Anderson I."/>
            <person name="Oda Y."/>
            <person name="Harwood C.S."/>
            <person name="Richardson P."/>
        </authorList>
    </citation>
    <scope>NUCLEOTIDE SEQUENCE [LARGE SCALE GENOMIC DNA]</scope>
    <source>
        <strain>BisB18</strain>
    </source>
</reference>
<protein>
    <recommendedName>
        <fullName evidence="1">Anhydro-N-acetylmuramic acid kinase</fullName>
        <ecNumber evidence="1">2.7.1.170</ecNumber>
    </recommendedName>
    <alternativeName>
        <fullName evidence="1">AnhMurNAc kinase</fullName>
    </alternativeName>
</protein>
<name>ANMK_RHOPB</name>